<keyword id="KW-0004">4Fe-4S</keyword>
<keyword id="KW-0408">Iron</keyword>
<keyword id="KW-0411">Iron-sulfur</keyword>
<keyword id="KW-0414">Isoprene biosynthesis</keyword>
<keyword id="KW-0479">Metal-binding</keyword>
<keyword id="KW-0560">Oxidoreductase</keyword>
<evidence type="ECO:0000255" key="1">
    <source>
        <dbReference type="HAMAP-Rule" id="MF_00191"/>
    </source>
</evidence>
<proteinExistence type="inferred from homology"/>
<name>ISPH_FRATM</name>
<protein>
    <recommendedName>
        <fullName evidence="1">4-hydroxy-3-methylbut-2-enyl diphosphate reductase</fullName>
        <shortName evidence="1">HMBPP reductase</shortName>
        <ecNumber evidence="1">1.17.7.4</ecNumber>
    </recommendedName>
</protein>
<accession>B2SES8</accession>
<feature type="chain" id="PRO_1000098950" description="4-hydroxy-3-methylbut-2-enyl diphosphate reductase">
    <location>
        <begin position="1"/>
        <end position="318"/>
    </location>
</feature>
<feature type="active site" description="Proton donor" evidence="1">
    <location>
        <position position="126"/>
    </location>
</feature>
<feature type="binding site" evidence="1">
    <location>
        <position position="12"/>
    </location>
    <ligand>
        <name>[4Fe-4S] cluster</name>
        <dbReference type="ChEBI" id="CHEBI:49883"/>
    </ligand>
</feature>
<feature type="binding site" evidence="1">
    <location>
        <position position="41"/>
    </location>
    <ligand>
        <name>(2E)-4-hydroxy-3-methylbut-2-enyl diphosphate</name>
        <dbReference type="ChEBI" id="CHEBI:128753"/>
    </ligand>
</feature>
<feature type="binding site" evidence="1">
    <location>
        <position position="41"/>
    </location>
    <ligand>
        <name>dimethylallyl diphosphate</name>
        <dbReference type="ChEBI" id="CHEBI:57623"/>
    </ligand>
</feature>
<feature type="binding site" evidence="1">
    <location>
        <position position="41"/>
    </location>
    <ligand>
        <name>isopentenyl diphosphate</name>
        <dbReference type="ChEBI" id="CHEBI:128769"/>
    </ligand>
</feature>
<feature type="binding site" evidence="1">
    <location>
        <position position="74"/>
    </location>
    <ligand>
        <name>(2E)-4-hydroxy-3-methylbut-2-enyl diphosphate</name>
        <dbReference type="ChEBI" id="CHEBI:128753"/>
    </ligand>
</feature>
<feature type="binding site" evidence="1">
    <location>
        <position position="74"/>
    </location>
    <ligand>
        <name>dimethylallyl diphosphate</name>
        <dbReference type="ChEBI" id="CHEBI:57623"/>
    </ligand>
</feature>
<feature type="binding site" evidence="1">
    <location>
        <position position="74"/>
    </location>
    <ligand>
        <name>isopentenyl diphosphate</name>
        <dbReference type="ChEBI" id="CHEBI:128769"/>
    </ligand>
</feature>
<feature type="binding site" evidence="1">
    <location>
        <position position="96"/>
    </location>
    <ligand>
        <name>[4Fe-4S] cluster</name>
        <dbReference type="ChEBI" id="CHEBI:49883"/>
    </ligand>
</feature>
<feature type="binding site" evidence="1">
    <location>
        <position position="124"/>
    </location>
    <ligand>
        <name>(2E)-4-hydroxy-3-methylbut-2-enyl diphosphate</name>
        <dbReference type="ChEBI" id="CHEBI:128753"/>
    </ligand>
</feature>
<feature type="binding site" evidence="1">
    <location>
        <position position="124"/>
    </location>
    <ligand>
        <name>dimethylallyl diphosphate</name>
        <dbReference type="ChEBI" id="CHEBI:57623"/>
    </ligand>
</feature>
<feature type="binding site" evidence="1">
    <location>
        <position position="124"/>
    </location>
    <ligand>
        <name>isopentenyl diphosphate</name>
        <dbReference type="ChEBI" id="CHEBI:128769"/>
    </ligand>
</feature>
<feature type="binding site" evidence="1">
    <location>
        <position position="167"/>
    </location>
    <ligand>
        <name>(2E)-4-hydroxy-3-methylbut-2-enyl diphosphate</name>
        <dbReference type="ChEBI" id="CHEBI:128753"/>
    </ligand>
</feature>
<feature type="binding site" evidence="1">
    <location>
        <position position="197"/>
    </location>
    <ligand>
        <name>[4Fe-4S] cluster</name>
        <dbReference type="ChEBI" id="CHEBI:49883"/>
    </ligand>
</feature>
<feature type="binding site" evidence="1">
    <location>
        <position position="225"/>
    </location>
    <ligand>
        <name>(2E)-4-hydroxy-3-methylbut-2-enyl diphosphate</name>
        <dbReference type="ChEBI" id="CHEBI:128753"/>
    </ligand>
</feature>
<feature type="binding site" evidence="1">
    <location>
        <position position="225"/>
    </location>
    <ligand>
        <name>dimethylallyl diphosphate</name>
        <dbReference type="ChEBI" id="CHEBI:57623"/>
    </ligand>
</feature>
<feature type="binding site" evidence="1">
    <location>
        <position position="225"/>
    </location>
    <ligand>
        <name>isopentenyl diphosphate</name>
        <dbReference type="ChEBI" id="CHEBI:128769"/>
    </ligand>
</feature>
<feature type="binding site" evidence="1">
    <location>
        <position position="226"/>
    </location>
    <ligand>
        <name>(2E)-4-hydroxy-3-methylbut-2-enyl diphosphate</name>
        <dbReference type="ChEBI" id="CHEBI:128753"/>
    </ligand>
</feature>
<feature type="binding site" evidence="1">
    <location>
        <position position="226"/>
    </location>
    <ligand>
        <name>dimethylallyl diphosphate</name>
        <dbReference type="ChEBI" id="CHEBI:57623"/>
    </ligand>
</feature>
<feature type="binding site" evidence="1">
    <location>
        <position position="226"/>
    </location>
    <ligand>
        <name>isopentenyl diphosphate</name>
        <dbReference type="ChEBI" id="CHEBI:128769"/>
    </ligand>
</feature>
<feature type="binding site" evidence="1">
    <location>
        <position position="227"/>
    </location>
    <ligand>
        <name>(2E)-4-hydroxy-3-methylbut-2-enyl diphosphate</name>
        <dbReference type="ChEBI" id="CHEBI:128753"/>
    </ligand>
</feature>
<feature type="binding site" evidence="1">
    <location>
        <position position="227"/>
    </location>
    <ligand>
        <name>dimethylallyl diphosphate</name>
        <dbReference type="ChEBI" id="CHEBI:57623"/>
    </ligand>
</feature>
<feature type="binding site" evidence="1">
    <location>
        <position position="227"/>
    </location>
    <ligand>
        <name>isopentenyl diphosphate</name>
        <dbReference type="ChEBI" id="CHEBI:128769"/>
    </ligand>
</feature>
<feature type="binding site" evidence="1">
    <location>
        <position position="269"/>
    </location>
    <ligand>
        <name>(2E)-4-hydroxy-3-methylbut-2-enyl diphosphate</name>
        <dbReference type="ChEBI" id="CHEBI:128753"/>
    </ligand>
</feature>
<feature type="binding site" evidence="1">
    <location>
        <position position="269"/>
    </location>
    <ligand>
        <name>dimethylallyl diphosphate</name>
        <dbReference type="ChEBI" id="CHEBI:57623"/>
    </ligand>
</feature>
<feature type="binding site" evidence="1">
    <location>
        <position position="269"/>
    </location>
    <ligand>
        <name>isopentenyl diphosphate</name>
        <dbReference type="ChEBI" id="CHEBI:128769"/>
    </ligand>
</feature>
<organism>
    <name type="scientific">Francisella tularensis subsp. mediasiatica (strain FSC147)</name>
    <dbReference type="NCBI Taxonomy" id="441952"/>
    <lineage>
        <taxon>Bacteria</taxon>
        <taxon>Pseudomonadati</taxon>
        <taxon>Pseudomonadota</taxon>
        <taxon>Gammaproteobacteria</taxon>
        <taxon>Thiotrichales</taxon>
        <taxon>Francisellaceae</taxon>
        <taxon>Francisella</taxon>
    </lineage>
</organism>
<gene>
    <name evidence="1" type="primary">ispH</name>
    <name type="ordered locus">FTM_0425</name>
</gene>
<sequence length="318" mass="35152">MKILLANPRGFCAGVSRAVETVEKVLEVEKSPVYVRHEVVHNKVVVDSLKKKGVVFVKEVDEVPDDAVCIFSAHGVSLKVEEAAAKKNLVLYDATCPLVTKVHRGVRLASNNDAECILIGHKGHPEVQGTMGQYRSKKGAIYLIESEEDLNKLTIKDPDNLYYATQTTLSVDETQGIIQALKDKYPNIKGPKKEDICYATQNRQTAIKAMLKHIDVLVVVGSQNSSNSNRLKELATLEGIDAYLVDNPKDVDKLWFDNKKVCGVSAGASAPEYLVQQIISQISKVCSTEVEEFEGIKEEVYFPLPRLLKQKIGTGKVE</sequence>
<dbReference type="EC" id="1.17.7.4" evidence="1"/>
<dbReference type="EMBL" id="CP000915">
    <property type="protein sequence ID" value="ACD30454.1"/>
    <property type="molecule type" value="Genomic_DNA"/>
</dbReference>
<dbReference type="SMR" id="B2SES8"/>
<dbReference type="KEGG" id="ftm:FTM_0425"/>
<dbReference type="HOGENOM" id="CLU_027486_1_0_6"/>
<dbReference type="UniPathway" id="UPA00056">
    <property type="reaction ID" value="UER00097"/>
</dbReference>
<dbReference type="UniPathway" id="UPA00059">
    <property type="reaction ID" value="UER00105"/>
</dbReference>
<dbReference type="GO" id="GO:0051539">
    <property type="term" value="F:4 iron, 4 sulfur cluster binding"/>
    <property type="evidence" value="ECO:0007669"/>
    <property type="project" value="UniProtKB-UniRule"/>
</dbReference>
<dbReference type="GO" id="GO:0051745">
    <property type="term" value="F:4-hydroxy-3-methylbut-2-enyl diphosphate reductase activity"/>
    <property type="evidence" value="ECO:0007669"/>
    <property type="project" value="UniProtKB-UniRule"/>
</dbReference>
<dbReference type="GO" id="GO:0046872">
    <property type="term" value="F:metal ion binding"/>
    <property type="evidence" value="ECO:0007669"/>
    <property type="project" value="UniProtKB-KW"/>
</dbReference>
<dbReference type="GO" id="GO:0050992">
    <property type="term" value="P:dimethylallyl diphosphate biosynthetic process"/>
    <property type="evidence" value="ECO:0007669"/>
    <property type="project" value="UniProtKB-UniRule"/>
</dbReference>
<dbReference type="GO" id="GO:0019288">
    <property type="term" value="P:isopentenyl diphosphate biosynthetic process, methylerythritol 4-phosphate pathway"/>
    <property type="evidence" value="ECO:0007669"/>
    <property type="project" value="UniProtKB-UniRule"/>
</dbReference>
<dbReference type="GO" id="GO:0016114">
    <property type="term" value="P:terpenoid biosynthetic process"/>
    <property type="evidence" value="ECO:0007669"/>
    <property type="project" value="UniProtKB-UniRule"/>
</dbReference>
<dbReference type="CDD" id="cd13944">
    <property type="entry name" value="lytB_ispH"/>
    <property type="match status" value="1"/>
</dbReference>
<dbReference type="Gene3D" id="3.40.50.11270">
    <property type="match status" value="1"/>
</dbReference>
<dbReference type="Gene3D" id="3.40.1010.20">
    <property type="entry name" value="4-hydroxy-3-methylbut-2-enyl diphosphate reductase, catalytic domain"/>
    <property type="match status" value="2"/>
</dbReference>
<dbReference type="HAMAP" id="MF_00191">
    <property type="entry name" value="IspH"/>
    <property type="match status" value="1"/>
</dbReference>
<dbReference type="InterPro" id="IPR003451">
    <property type="entry name" value="LytB/IspH"/>
</dbReference>
<dbReference type="NCBIfam" id="TIGR00216">
    <property type="entry name" value="ispH_lytB"/>
    <property type="match status" value="1"/>
</dbReference>
<dbReference type="NCBIfam" id="NF002188">
    <property type="entry name" value="PRK01045.1-2"/>
    <property type="match status" value="1"/>
</dbReference>
<dbReference type="NCBIfam" id="NF002190">
    <property type="entry name" value="PRK01045.1-4"/>
    <property type="match status" value="1"/>
</dbReference>
<dbReference type="PANTHER" id="PTHR30426">
    <property type="entry name" value="4-HYDROXY-3-METHYLBUT-2-ENYL DIPHOSPHATE REDUCTASE"/>
    <property type="match status" value="1"/>
</dbReference>
<dbReference type="PANTHER" id="PTHR30426:SF0">
    <property type="entry name" value="4-HYDROXY-3-METHYLBUT-2-ENYL DIPHOSPHATE REDUCTASE"/>
    <property type="match status" value="1"/>
</dbReference>
<dbReference type="Pfam" id="PF02401">
    <property type="entry name" value="LYTB"/>
    <property type="match status" value="1"/>
</dbReference>
<reference key="1">
    <citation type="journal article" date="2009" name="PLoS Pathog.">
        <title>Molecular evolutionary consequences of niche restriction in Francisella tularensis, a facultative intracellular pathogen.</title>
        <authorList>
            <person name="Larsson P."/>
            <person name="Elfsmark D."/>
            <person name="Svensson K."/>
            <person name="Wikstroem P."/>
            <person name="Forsman M."/>
            <person name="Brettin T."/>
            <person name="Keim P."/>
            <person name="Johansson A."/>
        </authorList>
    </citation>
    <scope>NUCLEOTIDE SEQUENCE [LARGE SCALE GENOMIC DNA]</scope>
    <source>
        <strain>FSC147</strain>
    </source>
</reference>
<comment type="function">
    <text evidence="1">Catalyzes the conversion of 1-hydroxy-2-methyl-2-(E)-butenyl 4-diphosphate (HMBPP) into a mixture of isopentenyl diphosphate (IPP) and dimethylallyl diphosphate (DMAPP). Acts in the terminal step of the DOXP/MEP pathway for isoprenoid precursor biosynthesis.</text>
</comment>
<comment type="catalytic activity">
    <reaction evidence="1">
        <text>isopentenyl diphosphate + 2 oxidized [2Fe-2S]-[ferredoxin] + H2O = (2E)-4-hydroxy-3-methylbut-2-enyl diphosphate + 2 reduced [2Fe-2S]-[ferredoxin] + 2 H(+)</text>
        <dbReference type="Rhea" id="RHEA:24488"/>
        <dbReference type="Rhea" id="RHEA-COMP:10000"/>
        <dbReference type="Rhea" id="RHEA-COMP:10001"/>
        <dbReference type="ChEBI" id="CHEBI:15377"/>
        <dbReference type="ChEBI" id="CHEBI:15378"/>
        <dbReference type="ChEBI" id="CHEBI:33737"/>
        <dbReference type="ChEBI" id="CHEBI:33738"/>
        <dbReference type="ChEBI" id="CHEBI:128753"/>
        <dbReference type="ChEBI" id="CHEBI:128769"/>
        <dbReference type="EC" id="1.17.7.4"/>
    </reaction>
</comment>
<comment type="catalytic activity">
    <reaction evidence="1">
        <text>dimethylallyl diphosphate + 2 oxidized [2Fe-2S]-[ferredoxin] + H2O = (2E)-4-hydroxy-3-methylbut-2-enyl diphosphate + 2 reduced [2Fe-2S]-[ferredoxin] + 2 H(+)</text>
        <dbReference type="Rhea" id="RHEA:24825"/>
        <dbReference type="Rhea" id="RHEA-COMP:10000"/>
        <dbReference type="Rhea" id="RHEA-COMP:10001"/>
        <dbReference type="ChEBI" id="CHEBI:15377"/>
        <dbReference type="ChEBI" id="CHEBI:15378"/>
        <dbReference type="ChEBI" id="CHEBI:33737"/>
        <dbReference type="ChEBI" id="CHEBI:33738"/>
        <dbReference type="ChEBI" id="CHEBI:57623"/>
        <dbReference type="ChEBI" id="CHEBI:128753"/>
        <dbReference type="EC" id="1.17.7.4"/>
    </reaction>
</comment>
<comment type="cofactor">
    <cofactor evidence="1">
        <name>[4Fe-4S] cluster</name>
        <dbReference type="ChEBI" id="CHEBI:49883"/>
    </cofactor>
    <text evidence="1">Binds 1 [4Fe-4S] cluster per subunit.</text>
</comment>
<comment type="pathway">
    <text evidence="1">Isoprenoid biosynthesis; dimethylallyl diphosphate biosynthesis; dimethylallyl diphosphate from (2E)-4-hydroxy-3-methylbutenyl diphosphate: step 1/1.</text>
</comment>
<comment type="pathway">
    <text evidence="1">Isoprenoid biosynthesis; isopentenyl diphosphate biosynthesis via DXP pathway; isopentenyl diphosphate from 1-deoxy-D-xylulose 5-phosphate: step 6/6.</text>
</comment>
<comment type="similarity">
    <text evidence="1">Belongs to the IspH family.</text>
</comment>